<dbReference type="EC" id="3.2.2.27" evidence="1"/>
<dbReference type="EMBL" id="CP000020">
    <property type="protein sequence ID" value="AAW86608.1"/>
    <property type="molecule type" value="Genomic_DNA"/>
</dbReference>
<dbReference type="RefSeq" id="WP_011262567.1">
    <property type="nucleotide sequence ID" value="NC_006840.2"/>
</dbReference>
<dbReference type="RefSeq" id="YP_205496.1">
    <property type="nucleotide sequence ID" value="NC_006840.2"/>
</dbReference>
<dbReference type="SMR" id="Q5E2Y8"/>
<dbReference type="STRING" id="312309.VF_2113"/>
<dbReference type="EnsemblBacteria" id="AAW86608">
    <property type="protein sequence ID" value="AAW86608"/>
    <property type="gene ID" value="VF_2113"/>
</dbReference>
<dbReference type="GeneID" id="54164819"/>
<dbReference type="KEGG" id="vfi:VF_2113"/>
<dbReference type="PATRIC" id="fig|312309.11.peg.2155"/>
<dbReference type="eggNOG" id="COG0692">
    <property type="taxonomic scope" value="Bacteria"/>
</dbReference>
<dbReference type="HOGENOM" id="CLU_032162_3_0_6"/>
<dbReference type="OrthoDB" id="9804372at2"/>
<dbReference type="Proteomes" id="UP000000537">
    <property type="component" value="Chromosome I"/>
</dbReference>
<dbReference type="GO" id="GO:0005737">
    <property type="term" value="C:cytoplasm"/>
    <property type="evidence" value="ECO:0007669"/>
    <property type="project" value="UniProtKB-SubCell"/>
</dbReference>
<dbReference type="GO" id="GO:0004844">
    <property type="term" value="F:uracil DNA N-glycosylase activity"/>
    <property type="evidence" value="ECO:0007669"/>
    <property type="project" value="UniProtKB-UniRule"/>
</dbReference>
<dbReference type="GO" id="GO:0097510">
    <property type="term" value="P:base-excision repair, AP site formation via deaminated base removal"/>
    <property type="evidence" value="ECO:0007669"/>
    <property type="project" value="TreeGrafter"/>
</dbReference>
<dbReference type="CDD" id="cd10027">
    <property type="entry name" value="UDG-F1-like"/>
    <property type="match status" value="1"/>
</dbReference>
<dbReference type="FunFam" id="3.40.470.10:FF:000001">
    <property type="entry name" value="Uracil-DNA glycosylase"/>
    <property type="match status" value="1"/>
</dbReference>
<dbReference type="Gene3D" id="3.40.470.10">
    <property type="entry name" value="Uracil-DNA glycosylase-like domain"/>
    <property type="match status" value="1"/>
</dbReference>
<dbReference type="HAMAP" id="MF_00148">
    <property type="entry name" value="UDG"/>
    <property type="match status" value="1"/>
</dbReference>
<dbReference type="InterPro" id="IPR002043">
    <property type="entry name" value="UDG_fam1"/>
</dbReference>
<dbReference type="InterPro" id="IPR018085">
    <property type="entry name" value="Ura-DNA_Glyclase_AS"/>
</dbReference>
<dbReference type="InterPro" id="IPR005122">
    <property type="entry name" value="Uracil-DNA_glycosylase-like"/>
</dbReference>
<dbReference type="InterPro" id="IPR036895">
    <property type="entry name" value="Uracil-DNA_glycosylase-like_sf"/>
</dbReference>
<dbReference type="NCBIfam" id="NF003588">
    <property type="entry name" value="PRK05254.1-1"/>
    <property type="match status" value="1"/>
</dbReference>
<dbReference type="NCBIfam" id="NF003589">
    <property type="entry name" value="PRK05254.1-2"/>
    <property type="match status" value="1"/>
</dbReference>
<dbReference type="NCBIfam" id="NF003591">
    <property type="entry name" value="PRK05254.1-4"/>
    <property type="match status" value="1"/>
</dbReference>
<dbReference type="NCBIfam" id="NF003592">
    <property type="entry name" value="PRK05254.1-5"/>
    <property type="match status" value="1"/>
</dbReference>
<dbReference type="NCBIfam" id="TIGR00628">
    <property type="entry name" value="ung"/>
    <property type="match status" value="1"/>
</dbReference>
<dbReference type="PANTHER" id="PTHR11264">
    <property type="entry name" value="URACIL-DNA GLYCOSYLASE"/>
    <property type="match status" value="1"/>
</dbReference>
<dbReference type="PANTHER" id="PTHR11264:SF0">
    <property type="entry name" value="URACIL-DNA GLYCOSYLASE"/>
    <property type="match status" value="1"/>
</dbReference>
<dbReference type="Pfam" id="PF03167">
    <property type="entry name" value="UDG"/>
    <property type="match status" value="1"/>
</dbReference>
<dbReference type="SMART" id="SM00986">
    <property type="entry name" value="UDG"/>
    <property type="match status" value="1"/>
</dbReference>
<dbReference type="SMART" id="SM00987">
    <property type="entry name" value="UreE_C"/>
    <property type="match status" value="1"/>
</dbReference>
<dbReference type="SUPFAM" id="SSF52141">
    <property type="entry name" value="Uracil-DNA glycosylase-like"/>
    <property type="match status" value="1"/>
</dbReference>
<dbReference type="PROSITE" id="PS00130">
    <property type="entry name" value="U_DNA_GLYCOSYLASE"/>
    <property type="match status" value="1"/>
</dbReference>
<protein>
    <recommendedName>
        <fullName evidence="1">Uracil-DNA glycosylase</fullName>
        <shortName evidence="1">UDG</shortName>
        <ecNumber evidence="1">3.2.2.27</ecNumber>
    </recommendedName>
</protein>
<gene>
    <name evidence="1" type="primary">ung</name>
    <name type="ordered locus">VF_2113</name>
</gene>
<evidence type="ECO:0000255" key="1">
    <source>
        <dbReference type="HAMAP-Rule" id="MF_00148"/>
    </source>
</evidence>
<feature type="chain" id="PRO_1000199804" description="Uracil-DNA glycosylase">
    <location>
        <begin position="1"/>
        <end position="224"/>
    </location>
</feature>
<feature type="active site" description="Proton acceptor" evidence="1">
    <location>
        <position position="62"/>
    </location>
</feature>
<keyword id="KW-0963">Cytoplasm</keyword>
<keyword id="KW-0227">DNA damage</keyword>
<keyword id="KW-0234">DNA repair</keyword>
<keyword id="KW-0378">Hydrolase</keyword>
<keyword id="KW-1185">Reference proteome</keyword>
<name>UNG_ALIF1</name>
<comment type="function">
    <text evidence="1">Excises uracil residues from the DNA which can arise as a result of misincorporation of dUMP residues by DNA polymerase or due to deamination of cytosine.</text>
</comment>
<comment type="catalytic activity">
    <reaction evidence="1">
        <text>Hydrolyzes single-stranded DNA or mismatched double-stranded DNA and polynucleotides, releasing free uracil.</text>
        <dbReference type="EC" id="3.2.2.27"/>
    </reaction>
</comment>
<comment type="subcellular location">
    <subcellularLocation>
        <location evidence="1">Cytoplasm</location>
    </subcellularLocation>
</comment>
<comment type="similarity">
    <text evidence="1">Belongs to the uracil-DNA glycosylase (UDG) superfamily. UNG family.</text>
</comment>
<sequence>MALTWNSIISAEKKKAYYQSMSEKIDAQRSLGKSIFPKEEHIFTAFDLTPFHDVKVVILGQDPYHGEGQAHGLSFSVLPGVKIPPSLRNMYKELAEDIPGFTIPEHGYLKTWAEQGVLLLNTVLTVEEAKAHSHAKFGWETFTDAIIKKINDDMEGVIFLLWGAHAQKKGANIDTSRHFILQAPHPSPLSAHRGFFGCKHFSQTNELLRKQNLSEINWGAVTSS</sequence>
<accession>Q5E2Y8</accession>
<organism>
    <name type="scientific">Aliivibrio fischeri (strain ATCC 700601 / ES114)</name>
    <name type="common">Vibrio fischeri</name>
    <dbReference type="NCBI Taxonomy" id="312309"/>
    <lineage>
        <taxon>Bacteria</taxon>
        <taxon>Pseudomonadati</taxon>
        <taxon>Pseudomonadota</taxon>
        <taxon>Gammaproteobacteria</taxon>
        <taxon>Vibrionales</taxon>
        <taxon>Vibrionaceae</taxon>
        <taxon>Aliivibrio</taxon>
    </lineage>
</organism>
<reference key="1">
    <citation type="journal article" date="2005" name="Proc. Natl. Acad. Sci. U.S.A.">
        <title>Complete genome sequence of Vibrio fischeri: a symbiotic bacterium with pathogenic congeners.</title>
        <authorList>
            <person name="Ruby E.G."/>
            <person name="Urbanowski M."/>
            <person name="Campbell J."/>
            <person name="Dunn A."/>
            <person name="Faini M."/>
            <person name="Gunsalus R."/>
            <person name="Lostroh P."/>
            <person name="Lupp C."/>
            <person name="McCann J."/>
            <person name="Millikan D."/>
            <person name="Schaefer A."/>
            <person name="Stabb E."/>
            <person name="Stevens A."/>
            <person name="Visick K."/>
            <person name="Whistler C."/>
            <person name="Greenberg E.P."/>
        </authorList>
    </citation>
    <scope>NUCLEOTIDE SEQUENCE [LARGE SCALE GENOMIC DNA]</scope>
    <source>
        <strain>ATCC 700601 / ES114</strain>
    </source>
</reference>
<proteinExistence type="inferred from homology"/>